<comment type="function">
    <text evidence="1">Catalyzes the dephosphorylation of undecaprenyl diphosphate (UPP). Confers resistance to bacitracin.</text>
</comment>
<comment type="catalytic activity">
    <reaction evidence="1">
        <text>di-trans,octa-cis-undecaprenyl diphosphate + H2O = di-trans,octa-cis-undecaprenyl phosphate + phosphate + H(+)</text>
        <dbReference type="Rhea" id="RHEA:28094"/>
        <dbReference type="ChEBI" id="CHEBI:15377"/>
        <dbReference type="ChEBI" id="CHEBI:15378"/>
        <dbReference type="ChEBI" id="CHEBI:43474"/>
        <dbReference type="ChEBI" id="CHEBI:58405"/>
        <dbReference type="ChEBI" id="CHEBI:60392"/>
        <dbReference type="EC" id="3.6.1.27"/>
    </reaction>
</comment>
<comment type="subcellular location">
    <subcellularLocation>
        <location evidence="1">Cell membrane</location>
        <topology evidence="1">Multi-pass membrane protein</topology>
    </subcellularLocation>
</comment>
<comment type="miscellaneous">
    <text>Bacitracin is thought to be involved in the inhibition of peptidoglycan synthesis by sequestering undecaprenyl diphosphate, thereby reducing the pool of lipid carrier available.</text>
</comment>
<comment type="similarity">
    <text evidence="1">Belongs to the UppP family.</text>
</comment>
<evidence type="ECO:0000255" key="1">
    <source>
        <dbReference type="HAMAP-Rule" id="MF_01006"/>
    </source>
</evidence>
<dbReference type="EC" id="3.6.1.27" evidence="1"/>
<dbReference type="EMBL" id="AE004092">
    <property type="protein sequence ID" value="AAK33352.1"/>
    <property type="molecule type" value="Genomic_DNA"/>
</dbReference>
<dbReference type="EMBL" id="CP000017">
    <property type="protein sequence ID" value="AAZ50857.1"/>
    <property type="molecule type" value="Genomic_DNA"/>
</dbReference>
<dbReference type="RefSeq" id="NP_268631.1">
    <property type="nucleotide sequence ID" value="NC_002737.2"/>
</dbReference>
<dbReference type="SMR" id="P67392"/>
<dbReference type="PaxDb" id="1314-HKU360_00278"/>
<dbReference type="KEGG" id="spy:SPy_0280"/>
<dbReference type="KEGG" id="spz:M5005_Spy0238"/>
<dbReference type="PATRIC" id="fig|160490.10.peg.246"/>
<dbReference type="HOGENOM" id="CLU_060296_2_0_9"/>
<dbReference type="OMA" id="AWYRIVF"/>
<dbReference type="Proteomes" id="UP000000750">
    <property type="component" value="Chromosome"/>
</dbReference>
<dbReference type="GO" id="GO:0005886">
    <property type="term" value="C:plasma membrane"/>
    <property type="evidence" value="ECO:0007669"/>
    <property type="project" value="UniProtKB-SubCell"/>
</dbReference>
<dbReference type="GO" id="GO:0050380">
    <property type="term" value="F:undecaprenyl-diphosphatase activity"/>
    <property type="evidence" value="ECO:0007669"/>
    <property type="project" value="UniProtKB-UniRule"/>
</dbReference>
<dbReference type="GO" id="GO:0071555">
    <property type="term" value="P:cell wall organization"/>
    <property type="evidence" value="ECO:0007669"/>
    <property type="project" value="UniProtKB-KW"/>
</dbReference>
<dbReference type="GO" id="GO:0009252">
    <property type="term" value="P:peptidoglycan biosynthetic process"/>
    <property type="evidence" value="ECO:0007669"/>
    <property type="project" value="UniProtKB-KW"/>
</dbReference>
<dbReference type="GO" id="GO:0008360">
    <property type="term" value="P:regulation of cell shape"/>
    <property type="evidence" value="ECO:0007669"/>
    <property type="project" value="UniProtKB-KW"/>
</dbReference>
<dbReference type="GO" id="GO:0046677">
    <property type="term" value="P:response to antibiotic"/>
    <property type="evidence" value="ECO:0007669"/>
    <property type="project" value="UniProtKB-UniRule"/>
</dbReference>
<dbReference type="HAMAP" id="MF_01006">
    <property type="entry name" value="Undec_diphosphatase"/>
    <property type="match status" value="1"/>
</dbReference>
<dbReference type="InterPro" id="IPR003824">
    <property type="entry name" value="UppP"/>
</dbReference>
<dbReference type="NCBIfam" id="NF001391">
    <property type="entry name" value="PRK00281.1-5"/>
    <property type="match status" value="1"/>
</dbReference>
<dbReference type="PANTHER" id="PTHR30622">
    <property type="entry name" value="UNDECAPRENYL-DIPHOSPHATASE"/>
    <property type="match status" value="1"/>
</dbReference>
<dbReference type="PANTHER" id="PTHR30622:SF3">
    <property type="entry name" value="UNDECAPRENYL-DIPHOSPHATASE"/>
    <property type="match status" value="1"/>
</dbReference>
<dbReference type="Pfam" id="PF02673">
    <property type="entry name" value="BacA"/>
    <property type="match status" value="1"/>
</dbReference>
<proteinExistence type="inferred from homology"/>
<organism>
    <name type="scientific">Streptococcus pyogenes serotype M1</name>
    <dbReference type="NCBI Taxonomy" id="301447"/>
    <lineage>
        <taxon>Bacteria</taxon>
        <taxon>Bacillati</taxon>
        <taxon>Bacillota</taxon>
        <taxon>Bacilli</taxon>
        <taxon>Lactobacillales</taxon>
        <taxon>Streptococcaceae</taxon>
        <taxon>Streptococcus</taxon>
    </lineage>
</organism>
<reference key="1">
    <citation type="journal article" date="2001" name="Proc. Natl. Acad. Sci. U.S.A.">
        <title>Complete genome sequence of an M1 strain of Streptococcus pyogenes.</title>
        <authorList>
            <person name="Ferretti J.J."/>
            <person name="McShan W.M."/>
            <person name="Ajdic D.J."/>
            <person name="Savic D.J."/>
            <person name="Savic G."/>
            <person name="Lyon K."/>
            <person name="Primeaux C."/>
            <person name="Sezate S."/>
            <person name="Suvorov A.N."/>
            <person name="Kenton S."/>
            <person name="Lai H.S."/>
            <person name="Lin S.P."/>
            <person name="Qian Y."/>
            <person name="Jia H.G."/>
            <person name="Najar F.Z."/>
            <person name="Ren Q."/>
            <person name="Zhu H."/>
            <person name="Song L."/>
            <person name="White J."/>
            <person name="Yuan X."/>
            <person name="Clifton S.W."/>
            <person name="Roe B.A."/>
            <person name="McLaughlin R.E."/>
        </authorList>
    </citation>
    <scope>NUCLEOTIDE SEQUENCE [LARGE SCALE GENOMIC DNA]</scope>
    <source>
        <strain>ATCC 700294 / SF370 / Serotype M1</strain>
    </source>
</reference>
<reference key="2">
    <citation type="journal article" date="2005" name="J. Infect. Dis.">
        <title>Evolutionary origin and emergence of a highly successful clone of serotype M1 group A Streptococcus involved multiple horizontal gene transfer events.</title>
        <authorList>
            <person name="Sumby P."/>
            <person name="Porcella S.F."/>
            <person name="Madrigal A.G."/>
            <person name="Barbian K.D."/>
            <person name="Virtaneva K."/>
            <person name="Ricklefs S.M."/>
            <person name="Sturdevant D.E."/>
            <person name="Graham M.R."/>
            <person name="Vuopio-Varkila J."/>
            <person name="Hoe N.P."/>
            <person name="Musser J.M."/>
        </authorList>
    </citation>
    <scope>NUCLEOTIDE SEQUENCE [LARGE SCALE GENOMIC DNA]</scope>
    <source>
        <strain>ATCC BAA-947 / MGAS5005 / Serotype M1</strain>
    </source>
</reference>
<accession>P67392</accession>
<accession>Q490W1</accession>
<accession>Q9A1G8</accession>
<keyword id="KW-0046">Antibiotic resistance</keyword>
<keyword id="KW-1003">Cell membrane</keyword>
<keyword id="KW-0133">Cell shape</keyword>
<keyword id="KW-0961">Cell wall biogenesis/degradation</keyword>
<keyword id="KW-0378">Hydrolase</keyword>
<keyword id="KW-0472">Membrane</keyword>
<keyword id="KW-0573">Peptidoglycan synthesis</keyword>
<keyword id="KW-1185">Reference proteome</keyword>
<keyword id="KW-0812">Transmembrane</keyword>
<keyword id="KW-1133">Transmembrane helix</keyword>
<sequence>MLIIELLKAIFFGIIEGITEWLPVSSTGHLILVQEFIRLNQDKAFIEMFNIVIQLGAIIAVMLIYFERLNPFQPGKTAREVQLTWQLWLKVVIACIPSILIAVPLDNWFEAHFYFMVPIAIALIVYGIAFIWIEKRNAQQEPAVTELARMSYKTAFFIGCFQVLSIVPGTSRSGATILGAIILGTSRTVAADFTFFLAIPTMFGYSGLKAVKFFLDGHHLDFAQVLILLVASLTAFVVSLLAIRFLTDYVKKHDFTIFGKYRIVLGSLLLIYSFFKFVF</sequence>
<protein>
    <recommendedName>
        <fullName evidence="1">Undecaprenyl-diphosphatase</fullName>
        <ecNumber evidence="1">3.6.1.27</ecNumber>
    </recommendedName>
    <alternativeName>
        <fullName evidence="1">Bacitracin resistance protein</fullName>
    </alternativeName>
    <alternativeName>
        <fullName evidence="1">Undecaprenyl pyrophosphate phosphatase</fullName>
    </alternativeName>
</protein>
<gene>
    <name evidence="1" type="primary">uppP</name>
    <name type="synonym">bacA</name>
    <name type="synonym">upk</name>
    <name type="ordered locus">SPy_0280</name>
    <name type="ordered locus">M5005_Spy0238</name>
</gene>
<feature type="chain" id="PRO_0000151216" description="Undecaprenyl-diphosphatase">
    <location>
        <begin position="1"/>
        <end position="279"/>
    </location>
</feature>
<feature type="transmembrane region" description="Helical" evidence="1">
    <location>
        <begin position="2"/>
        <end position="22"/>
    </location>
</feature>
<feature type="transmembrane region" description="Helical" evidence="1">
    <location>
        <begin position="44"/>
        <end position="64"/>
    </location>
</feature>
<feature type="transmembrane region" description="Helical" evidence="1">
    <location>
        <begin position="85"/>
        <end position="105"/>
    </location>
</feature>
<feature type="transmembrane region" description="Helical" evidence="1">
    <location>
        <begin position="113"/>
        <end position="133"/>
    </location>
</feature>
<feature type="transmembrane region" description="Helical" evidence="1">
    <location>
        <begin position="163"/>
        <end position="183"/>
    </location>
</feature>
<feature type="transmembrane region" description="Helical" evidence="1">
    <location>
        <begin position="188"/>
        <end position="208"/>
    </location>
</feature>
<feature type="transmembrane region" description="Helical" evidence="1">
    <location>
        <begin position="223"/>
        <end position="243"/>
    </location>
</feature>
<feature type="transmembrane region" description="Helical" evidence="1">
    <location>
        <begin position="255"/>
        <end position="275"/>
    </location>
</feature>
<name>UPPP_STRP1</name>